<keyword id="KW-0413">Isomerase</keyword>
<reference key="1">
    <citation type="journal article" date="2008" name="J. Bacteriol.">
        <title>The complete genome sequence of Escherichia coli DH10B: insights into the biology of a laboratory workhorse.</title>
        <authorList>
            <person name="Durfee T."/>
            <person name="Nelson R."/>
            <person name="Baldwin S."/>
            <person name="Plunkett G. III"/>
            <person name="Burland V."/>
            <person name="Mau B."/>
            <person name="Petrosino J.F."/>
            <person name="Qin X."/>
            <person name="Muzny D.M."/>
            <person name="Ayele M."/>
            <person name="Gibbs R.A."/>
            <person name="Csorgo B."/>
            <person name="Posfai G."/>
            <person name="Weinstock G.M."/>
            <person name="Blattner F.R."/>
        </authorList>
    </citation>
    <scope>NUCLEOTIDE SEQUENCE [LARGE SCALE GENOMIC DNA]</scope>
    <source>
        <strain>K12 / DH10B</strain>
    </source>
</reference>
<comment type="function">
    <text evidence="1">Catalyzes the isomerization of L-xylulose-5-phosphate to L-ribulose-5-phosphate. Is involved in the anaerobic L-ascorbate utilization.</text>
</comment>
<comment type="catalytic activity">
    <reaction evidence="1">
        <text>L-ribulose 5-phosphate = L-xylulose 5-phosphate</text>
        <dbReference type="Rhea" id="RHEA:18497"/>
        <dbReference type="ChEBI" id="CHEBI:57829"/>
        <dbReference type="ChEBI" id="CHEBI:58226"/>
        <dbReference type="EC" id="5.1.3.22"/>
    </reaction>
</comment>
<comment type="pathway">
    <text evidence="1">Cofactor degradation; L-ascorbate degradation; D-xylulose 5-phosphate from L-ascorbate: step 3/4.</text>
</comment>
<comment type="induction">
    <text evidence="1">Induced by L-ascorbate. Repressed by UlaR.</text>
</comment>
<comment type="similarity">
    <text evidence="1">Belongs to the L-ribulose-5-phosphate 3-epimerase family.</text>
</comment>
<sequence>MLSKQIPLGIYEKALPAGECWLERLQLAKTLGFDFVEMSVDETDDRLSRLNWSREQRLALVNAIVETGVRVPSMCLSAHRRFPLGSEDDAVRAQGLEIMRKAIQFAQDVGIRVIQLAGYDVYYQEANNETRRRFRDGLKESVEMASRAQVTLAMEIMDYPLMSSISKALGYAHYLNNPWFQLYPDIGNLSAWDNDVQMELQAGIGHIVAVHVKDTKPGVFKNVPFGEGVVDFERCFETLKQSGYCGPYLIEMWSETAEDPAAEVAKARDWVKARMAKAGMVEAA</sequence>
<feature type="chain" id="PRO_1000188826" description="L-ribulose-5-phosphate 3-epimerase UlaE">
    <location>
        <begin position="1"/>
        <end position="284"/>
    </location>
</feature>
<organism>
    <name type="scientific">Escherichia coli (strain K12 / DH10B)</name>
    <dbReference type="NCBI Taxonomy" id="316385"/>
    <lineage>
        <taxon>Bacteria</taxon>
        <taxon>Pseudomonadati</taxon>
        <taxon>Pseudomonadota</taxon>
        <taxon>Gammaproteobacteria</taxon>
        <taxon>Enterobacterales</taxon>
        <taxon>Enterobacteriaceae</taxon>
        <taxon>Escherichia</taxon>
    </lineage>
</organism>
<protein>
    <recommendedName>
        <fullName evidence="1">L-ribulose-5-phosphate 3-epimerase UlaE</fullName>
        <ecNumber evidence="1">5.1.3.22</ecNumber>
    </recommendedName>
    <alternativeName>
        <fullName evidence="1">L-ascorbate utilization protein E</fullName>
    </alternativeName>
    <alternativeName>
        <fullName evidence="1">L-xylulose-5-phosphate 3-epimerase</fullName>
    </alternativeName>
</protein>
<accession>B1XDU8</accession>
<gene>
    <name evidence="1" type="primary">ulaE</name>
    <name type="ordered locus">ECDH10B_4392</name>
</gene>
<dbReference type="EC" id="5.1.3.22" evidence="1"/>
<dbReference type="EMBL" id="CP000948">
    <property type="protein sequence ID" value="ACB05185.1"/>
    <property type="molecule type" value="Genomic_DNA"/>
</dbReference>
<dbReference type="RefSeq" id="WP_000949502.1">
    <property type="nucleotide sequence ID" value="NC_010473.1"/>
</dbReference>
<dbReference type="SMR" id="B1XDU8"/>
<dbReference type="KEGG" id="ecd:ECDH10B_4392"/>
<dbReference type="HOGENOM" id="CLU_082738_0_0_6"/>
<dbReference type="UniPathway" id="UPA00263">
    <property type="reaction ID" value="UER00379"/>
</dbReference>
<dbReference type="GO" id="GO:0016861">
    <property type="term" value="F:intramolecular oxidoreductase activity, interconverting aldoses and ketoses"/>
    <property type="evidence" value="ECO:0007669"/>
    <property type="project" value="InterPro"/>
</dbReference>
<dbReference type="GO" id="GO:0034015">
    <property type="term" value="F:L-ribulose-5-phosphate 3-epimerase activity"/>
    <property type="evidence" value="ECO:0007669"/>
    <property type="project" value="UniProtKB-UniRule"/>
</dbReference>
<dbReference type="GO" id="GO:0019854">
    <property type="term" value="P:L-ascorbic acid catabolic process"/>
    <property type="evidence" value="ECO:0007669"/>
    <property type="project" value="UniProtKB-UniRule"/>
</dbReference>
<dbReference type="FunFam" id="3.20.20.150:FF:000003">
    <property type="entry name" value="L-ribulose-5-phosphate 3-epimerase UlaE"/>
    <property type="match status" value="1"/>
</dbReference>
<dbReference type="Gene3D" id="3.20.20.150">
    <property type="entry name" value="Divalent-metal-dependent TIM barrel enzymes"/>
    <property type="match status" value="1"/>
</dbReference>
<dbReference type="HAMAP" id="MF_01951">
    <property type="entry name" value="UlaE"/>
    <property type="match status" value="1"/>
</dbReference>
<dbReference type="InterPro" id="IPR004560">
    <property type="entry name" value="L-Ru-5P_3-Epase"/>
</dbReference>
<dbReference type="InterPro" id="IPR023492">
    <property type="entry name" value="L-Ru-5P_3-Epase_Enterobacteria"/>
</dbReference>
<dbReference type="InterPro" id="IPR050417">
    <property type="entry name" value="Sugar_Epim/Isomerase"/>
</dbReference>
<dbReference type="InterPro" id="IPR036237">
    <property type="entry name" value="Xyl_isomerase-like_sf"/>
</dbReference>
<dbReference type="InterPro" id="IPR013022">
    <property type="entry name" value="Xyl_isomerase-like_TIM-brl"/>
</dbReference>
<dbReference type="NCBIfam" id="TIGR00542">
    <property type="entry name" value="hxl6Piso_put"/>
    <property type="match status" value="1"/>
</dbReference>
<dbReference type="NCBIfam" id="NF009688">
    <property type="entry name" value="PRK13209.1"/>
    <property type="match status" value="1"/>
</dbReference>
<dbReference type="NCBIfam" id="NF009689">
    <property type="entry name" value="PRK13210.1"/>
    <property type="match status" value="1"/>
</dbReference>
<dbReference type="PANTHER" id="PTHR43489">
    <property type="entry name" value="ISOMERASE"/>
    <property type="match status" value="1"/>
</dbReference>
<dbReference type="PANTHER" id="PTHR43489:SF8">
    <property type="entry name" value="L-RIBULOSE-5-PHOSPHATE 3-EPIMERASE ULAE"/>
    <property type="match status" value="1"/>
</dbReference>
<dbReference type="Pfam" id="PF01261">
    <property type="entry name" value="AP_endonuc_2"/>
    <property type="match status" value="1"/>
</dbReference>
<dbReference type="SUPFAM" id="SSF51658">
    <property type="entry name" value="Xylose isomerase-like"/>
    <property type="match status" value="1"/>
</dbReference>
<proteinExistence type="inferred from homology"/>
<evidence type="ECO:0000255" key="1">
    <source>
        <dbReference type="HAMAP-Rule" id="MF_01951"/>
    </source>
</evidence>
<name>ULAE_ECODH</name>